<proteinExistence type="evidence at protein level"/>
<gene>
    <name type="primary">TACC1</name>
    <name type="synonym">KIAA1103</name>
</gene>
<feature type="initiator methionine" description="Removed" evidence="24">
    <location>
        <position position="1"/>
    </location>
</feature>
<feature type="chain" id="PRO_0000179986" description="Transforming acidic coiled-coil-containing protein 1">
    <location>
        <begin position="2"/>
        <end position="805"/>
    </location>
</feature>
<feature type="domain" description="SPAZ 1">
    <location>
        <begin position="215"/>
        <end position="297"/>
    </location>
</feature>
<feature type="domain" description="SPAZ 2">
    <location>
        <begin position="359"/>
        <end position="507"/>
    </location>
</feature>
<feature type="region of interest" description="Interaction with LSM7 and SNRPG" evidence="5">
    <location>
        <begin position="2"/>
        <end position="55"/>
    </location>
</feature>
<feature type="region of interest" description="Disordered" evidence="3">
    <location>
        <begin position="23"/>
        <end position="140"/>
    </location>
</feature>
<feature type="region of interest" description="Interaction with TDRD7" evidence="7">
    <location>
        <begin position="152"/>
        <end position="259"/>
    </location>
</feature>
<feature type="region of interest" description="Interaction with YEATS4" evidence="4">
    <location>
        <begin position="206"/>
        <end position="427"/>
    </location>
</feature>
<feature type="region of interest" description="Disordered" evidence="3">
    <location>
        <begin position="215"/>
        <end position="457"/>
    </location>
</feature>
<feature type="region of interest" description="Disordered" evidence="3">
    <location>
        <begin position="493"/>
        <end position="526"/>
    </location>
</feature>
<feature type="region of interest" description="Interaction with CH-TOG">
    <location>
        <begin position="701"/>
        <end position="805"/>
    </location>
</feature>
<feature type="coiled-coil region">
    <location>
        <begin position="610"/>
        <end position="805"/>
    </location>
</feature>
<feature type="short sequence motif" description="Bipartite nuclear localization signal 1" evidence="2">
    <location>
        <begin position="226"/>
        <end position="241"/>
    </location>
</feature>
<feature type="short sequence motif" description="Bipartite nuclear localization signal 2" evidence="2">
    <location>
        <begin position="455"/>
        <end position="471"/>
    </location>
</feature>
<feature type="compositionally biased region" description="Acidic residues" evidence="3">
    <location>
        <begin position="28"/>
        <end position="45"/>
    </location>
</feature>
<feature type="compositionally biased region" description="Polar residues" evidence="3">
    <location>
        <begin position="47"/>
        <end position="60"/>
    </location>
</feature>
<feature type="compositionally biased region" description="Polar residues" evidence="3">
    <location>
        <begin position="111"/>
        <end position="128"/>
    </location>
</feature>
<feature type="compositionally biased region" description="Basic and acidic residues" evidence="3">
    <location>
        <begin position="130"/>
        <end position="140"/>
    </location>
</feature>
<feature type="compositionally biased region" description="Basic residues" evidence="3">
    <location>
        <begin position="226"/>
        <end position="242"/>
    </location>
</feature>
<feature type="compositionally biased region" description="Polar residues" evidence="3">
    <location>
        <begin position="296"/>
        <end position="305"/>
    </location>
</feature>
<feature type="compositionally biased region" description="Polar residues" evidence="3">
    <location>
        <begin position="377"/>
        <end position="413"/>
    </location>
</feature>
<feature type="compositionally biased region" description="Polar residues" evidence="3">
    <location>
        <begin position="431"/>
        <end position="447"/>
    </location>
</feature>
<feature type="compositionally biased region" description="Basic and acidic residues" evidence="3">
    <location>
        <begin position="497"/>
        <end position="509"/>
    </location>
</feature>
<feature type="modified residue" description="N-acetylalanine" evidence="24">
    <location>
        <position position="2"/>
    </location>
</feature>
<feature type="modified residue" description="Phosphoserine" evidence="24">
    <location>
        <position position="4"/>
    </location>
</feature>
<feature type="modified residue" description="Phosphoserine" evidence="24">
    <location>
        <position position="10"/>
    </location>
</feature>
<feature type="modified residue" description="Phosphoserine" evidence="25">
    <location>
        <position position="44"/>
    </location>
</feature>
<feature type="modified residue" description="Phosphoserine" evidence="25">
    <location>
        <position position="147"/>
    </location>
</feature>
<feature type="modified residue" description="Phosphoserine" evidence="25">
    <location>
        <position position="153"/>
    </location>
</feature>
<feature type="modified residue" description="Phosphoserine; by AURKC" evidence="11">
    <location>
        <position position="228"/>
    </location>
</feature>
<feature type="modified residue" description="Phosphoserine" evidence="25">
    <location>
        <position position="248"/>
    </location>
</feature>
<feature type="modified residue" description="Phosphoserine" evidence="23 25 26">
    <location>
        <position position="276"/>
    </location>
</feature>
<feature type="modified residue" description="Phosphoserine" evidence="1">
    <location>
        <position position="381"/>
    </location>
</feature>
<feature type="modified residue" description="Phosphoserine" evidence="1">
    <location>
        <position position="406"/>
    </location>
</feature>
<feature type="modified residue" description="Phosphoserine" evidence="1">
    <location>
        <position position="483"/>
    </location>
</feature>
<feature type="modified residue" description="Phosphotyrosine" evidence="22">
    <location>
        <position position="533"/>
    </location>
</feature>
<feature type="modified residue" description="Phosphoserine" evidence="26">
    <location>
        <position position="591"/>
    </location>
</feature>
<feature type="splice variant" id="VSP_012640" description="In isoform 8." evidence="20">
    <location>
        <begin position="1"/>
        <end position="651"/>
    </location>
</feature>
<feature type="splice variant" id="VSP_012639" description="In isoform 5." evidence="21">
    <location>
        <begin position="1"/>
        <end position="438"/>
    </location>
</feature>
<feature type="splice variant" id="VSP_012641" description="In isoform 4." evidence="21">
    <location>
        <begin position="1"/>
        <end position="426"/>
    </location>
</feature>
<feature type="splice variant" id="VSP_012638" description="In isoform 3." evidence="15">
    <location>
        <begin position="1"/>
        <end position="195"/>
    </location>
</feature>
<feature type="splice variant" id="VSP_012637" description="In isoform 7." evidence="18">
    <location>
        <begin position="1"/>
        <end position="41"/>
    </location>
</feature>
<feature type="splice variant" id="VSP_012643" description="In isoform 7." evidence="18">
    <original>EDSQAETKSLSF</original>
    <variation>MNNILKLK</variation>
    <location>
        <begin position="42"/>
        <end position="53"/>
    </location>
</feature>
<feature type="splice variant" id="VSP_012644" description="In isoform 6 and isoform 10." evidence="17">
    <original>S</original>
    <variation>R</variation>
    <location>
        <position position="54"/>
    </location>
</feature>
<feature type="splice variant" id="VSP_012645" description="In isoform 6 and isoform 10." evidence="17">
    <location>
        <begin position="55"/>
        <end position="464"/>
    </location>
</feature>
<feature type="splice variant" id="VSP_012642" description="In isoform 4." evidence="21">
    <original>DPFKPTTTLTSSDFCSPTGNHVNEILESPKKAKSRLIT</original>
    <variation>MGGSHSQTPRGREPAGERHPRPTETATTEQVKFLCFLL</variation>
    <location>
        <begin position="427"/>
        <end position="464"/>
    </location>
</feature>
<feature type="splice variant" id="VSP_012646" description="In isoform 5." evidence="21">
    <original>DFCSPTGNHVNEILESPKKAKSRLIT</original>
    <variation>MGGSHSQTPRGREPAGERHPRPTETA</variation>
    <location>
        <begin position="439"/>
        <end position="464"/>
    </location>
</feature>
<feature type="splice variant" id="VSP_012647" description="In isoform 2." evidence="13 14">
    <original>T</original>
    <variation>TTTEQVKFLCFLL</variation>
    <location>
        <position position="464"/>
    </location>
</feature>
<feature type="splice variant" id="VSP_012648" description="In isoform 7, isoform 9 and isoform 10." evidence="16 18">
    <location>
        <begin position="526"/>
        <end position="554"/>
    </location>
</feature>
<feature type="sequence variant" id="VAR_053703" description="In dbSNP:rs34235313.">
    <original>P</original>
    <variation>L</variation>
    <location>
        <position position="187"/>
    </location>
</feature>
<feature type="sequence variant" id="VAR_053704" description="In dbSNP:rs6980553.">
    <original>I</original>
    <variation>T</variation>
    <location>
        <position position="243"/>
    </location>
</feature>
<feature type="sequence variant" id="VAR_053705" description="In dbSNP:rs10107016.">
    <original>E</original>
    <variation>G</variation>
    <location>
        <position position="255"/>
    </location>
</feature>
<feature type="mutagenesis site" description="Impairs phosphorylation by AURKC." evidence="11">
    <original>S</original>
    <variation>A</variation>
    <location>
        <position position="228"/>
    </location>
</feature>
<feature type="mutagenesis site" description="Decreases interaction with THRA." evidence="10">
    <original>LI</original>
    <variation>AA</variation>
    <location>
        <begin position="609"/>
        <end position="610"/>
    </location>
</feature>
<feature type="sequence conflict" description="In Ref. 1; AAC32327." evidence="21" ref="1">
    <original>L</original>
    <variation>I</variation>
    <location>
        <position position="291"/>
    </location>
</feature>
<feature type="sequence conflict" description="In Ref. 6; AAH41391." evidence="21" ref="6">
    <original>P</original>
    <variation>H</variation>
    <location>
        <position position="428"/>
    </location>
</feature>
<feature type="sequence conflict" description="In Ref. 7; BAA83055." evidence="21" ref="7">
    <original>G</original>
    <variation>V</variation>
    <location>
        <position position="588"/>
    </location>
</feature>
<feature type="sequence conflict" description="In Ref. 7; BAA83055." evidence="21" ref="7">
    <location>
        <position position="654"/>
    </location>
</feature>
<feature type="sequence conflict" description="In Ref. 4; BAG65314." evidence="21" ref="4">
    <original>Q</original>
    <variation>R</variation>
    <location>
        <position position="785"/>
    </location>
</feature>
<feature type="initiator methionine" description="Removed" evidence="12">
    <location sequence="O75410-5">
        <position position="1"/>
    </location>
</feature>
<feature type="lipid moiety-binding region" description="N-myristoyl glycine" evidence="12">
    <location sequence="O75410-5">
        <position position="2"/>
    </location>
</feature>
<organism>
    <name type="scientific">Homo sapiens</name>
    <name type="common">Human</name>
    <dbReference type="NCBI Taxonomy" id="9606"/>
    <lineage>
        <taxon>Eukaryota</taxon>
        <taxon>Metazoa</taxon>
        <taxon>Chordata</taxon>
        <taxon>Craniata</taxon>
        <taxon>Vertebrata</taxon>
        <taxon>Euteleostomi</taxon>
        <taxon>Mammalia</taxon>
        <taxon>Eutheria</taxon>
        <taxon>Euarchontoglires</taxon>
        <taxon>Primates</taxon>
        <taxon>Haplorrhini</taxon>
        <taxon>Catarrhini</taxon>
        <taxon>Hominidae</taxon>
        <taxon>Homo</taxon>
    </lineage>
</organism>
<comment type="function">
    <text evidence="10">Involved in transcription regulation induced by nuclear receptors, including in T3 thyroid hormone and all-trans retinoic acid pathways (PubMed:20078863). Might promote the nuclear localization of the receptors (PubMed:20078863). Likely involved in the processes that promote cell division prior to the formation of differentiated tissues.</text>
</comment>
<comment type="subunit">
    <text evidence="4 5 7 8 9 10 11">Interacts with KIAA0097/CH-TOG and with the oncogenic transcription factor YEATS4. Interacts with AURKA, AURKB and AURKC. Interacts with LSM7, TDRD7 and SNRPG. Interacts with GCN5L2 and PCAF. Interacts with the thyroid hormone receptors THRB and THRA, predominantly with isoform alpha-2. The interaction with THRA isoform alpha-1 and THRB is decreased in the presence of thyroid hormone T3 (PubMed:20078863). Also interacts with other nuclear receptors, including ESR1, NR3C1, PPARG, RARA and RXRA, preferentially in the absence of their hormonal ligands (PubMed:20078863).</text>
</comment>
<comment type="interaction">
    <interactant intactId="EBI-624237">
        <id>O75410</id>
    </interactant>
    <interactant intactId="EBI-307461">
        <id>Q9Y297</id>
        <label>BTRC</label>
    </interactant>
    <organismsDiffer>false</organismsDiffer>
    <experiments>5</experiments>
</comment>
<comment type="interaction">
    <interactant intactId="EBI-624237">
        <id>O75410</id>
    </interactant>
    <interactant intactId="EBI-310585">
        <id>Q14008</id>
        <label>CKAP5</label>
    </interactant>
    <organismsDiffer>false</organismsDiffer>
    <experiments>6</experiments>
</comment>
<comment type="interaction">
    <interactant intactId="EBI-624237">
        <id>O75410</id>
    </interactant>
    <interactant intactId="EBI-466029">
        <id>P42858</id>
        <label>HTT</label>
    </interactant>
    <organismsDiffer>false</organismsDiffer>
    <experiments>4</experiments>
</comment>
<comment type="interaction">
    <interactant intactId="EBI-624237">
        <id>O75410</id>
    </interactant>
    <interactant intactId="EBI-1104564">
        <id>Q9Y316</id>
        <label>MEMO1</label>
    </interactant>
    <organismsDiffer>false</organismsDiffer>
    <experiments>4</experiments>
</comment>
<comment type="interaction">
    <interactant intactId="EBI-624237">
        <id>O75410</id>
    </interactant>
    <interactant intactId="EBI-747035">
        <id>Q9H788</id>
        <label>SH2D4A</label>
    </interactant>
    <organismsDiffer>false</organismsDiffer>
    <experiments>4</experiments>
</comment>
<comment type="interaction">
    <interactant intactId="EBI-624237">
        <id>O75410</id>
    </interactant>
    <interactant intactId="EBI-714206">
        <id>Q13190</id>
        <label>STX5</label>
    </interactant>
    <organismsDiffer>false</organismsDiffer>
    <experiments>3</experiments>
</comment>
<comment type="interaction">
    <interactant intactId="EBI-624237">
        <id>O75410</id>
    </interactant>
    <interactant intactId="EBI-624505">
        <id>Q8NHU6</id>
        <label>TDRD7</label>
    </interactant>
    <organismsDiffer>false</organismsDiffer>
    <experiments>4</experiments>
</comment>
<comment type="interaction">
    <interactant intactId="EBI-624237">
        <id>O75410</id>
    </interactant>
    <interactant intactId="EBI-2828217">
        <id>O43422</id>
        <label>THAP12</label>
    </interactant>
    <organismsDiffer>false</organismsDiffer>
    <experiments>3</experiments>
</comment>
<comment type="interaction">
    <interactant intactId="EBI-624237">
        <id>O75410</id>
    </interactant>
    <interactant intactId="EBI-399269">
        <id>O95619</id>
        <label>YEATS4</label>
    </interactant>
    <organismsDiffer>false</organismsDiffer>
    <experiments>6</experiments>
</comment>
<comment type="interaction">
    <interactant intactId="EBI-624252">
        <id>O75410-1</id>
    </interactant>
    <interactant intactId="EBI-310585">
        <id>Q14008</id>
        <label>CKAP5</label>
    </interactant>
    <organismsDiffer>false</organismsDiffer>
    <experiments>3</experiments>
</comment>
<comment type="interaction">
    <interactant intactId="EBI-624252">
        <id>O75410-1</id>
    </interactant>
    <interactant intactId="EBI-348372">
        <id>Q9UK45</id>
        <label>LSM7</label>
    </interactant>
    <organismsDiffer>false</organismsDiffer>
    <experiments>4</experiments>
</comment>
<comment type="interaction">
    <interactant intactId="EBI-624252">
        <id>O75410-1</id>
    </interactant>
    <interactant intactId="EBI-624585">
        <id>P62308</id>
        <label>SNRPG</label>
    </interactant>
    <organismsDiffer>false</organismsDiffer>
    <experiments>5</experiments>
</comment>
<comment type="interaction">
    <interactant intactId="EBI-624252">
        <id>O75410-1</id>
    </interactant>
    <interactant intactId="EBI-624505">
        <id>Q8NHU6</id>
        <label>TDRD7</label>
    </interactant>
    <organismsDiffer>false</organismsDiffer>
    <experiments>3</experiments>
</comment>
<comment type="interaction">
    <interactant intactId="EBI-624278">
        <id>O75410-6</id>
    </interactant>
    <interactant intactId="EBI-624291">
        <id>Q96GD4</id>
        <label>AURKB</label>
    </interactant>
    <organismsDiffer>false</organismsDiffer>
    <experiments>2</experiments>
</comment>
<comment type="interaction">
    <interactant intactId="EBI-624278">
        <id>O75410-6</id>
    </interactant>
    <interactant intactId="EBI-310585">
        <id>Q14008</id>
        <label>CKAP5</label>
    </interactant>
    <organismsDiffer>false</organismsDiffer>
    <experiments>2</experiments>
</comment>
<comment type="interaction">
    <interactant intactId="EBI-624278">
        <id>O75410-6</id>
    </interactant>
    <interactant intactId="EBI-348372">
        <id>Q9UK45</id>
        <label>LSM7</label>
    </interactant>
    <organismsDiffer>false</organismsDiffer>
    <experiments>2</experiments>
</comment>
<comment type="interaction">
    <interactant intactId="EBI-12007872">
        <id>O75410-7</id>
    </interactant>
    <interactant intactId="EBI-16429247">
        <id>A0A0S2Z507</id>
        <label>BTRC</label>
    </interactant>
    <organismsDiffer>false</organismsDiffer>
    <experiments>3</experiments>
</comment>
<comment type="interaction">
    <interactant intactId="EBI-12007872">
        <id>O75410-7</id>
    </interactant>
    <interactant intactId="EBI-16429269">
        <id>B7Z3H4</id>
        <label>BTRC</label>
    </interactant>
    <organismsDiffer>false</organismsDiffer>
    <experiments>3</experiments>
</comment>
<comment type="interaction">
    <interactant intactId="EBI-12007872">
        <id>O75410-7</id>
    </interactant>
    <interactant intactId="EBI-307461">
        <id>Q9Y297</id>
        <label>BTRC</label>
    </interactant>
    <organismsDiffer>false</organismsDiffer>
    <experiments>6</experiments>
</comment>
<comment type="interaction">
    <interactant intactId="EBI-12007872">
        <id>O75410-7</id>
    </interactant>
    <interactant intactId="EBI-2370770">
        <id>Q92889</id>
        <label>ERCC4</label>
    </interactant>
    <organismsDiffer>false</organismsDiffer>
    <experiments>3</experiments>
</comment>
<comment type="interaction">
    <interactant intactId="EBI-12007872">
        <id>O75410-7</id>
    </interactant>
    <interactant intactId="EBI-742802">
        <id>Q9Y247</id>
        <label>FAM50B</label>
    </interactant>
    <organismsDiffer>false</organismsDiffer>
    <experiments>3</experiments>
</comment>
<comment type="interaction">
    <interactant intactId="EBI-12007872">
        <id>O75410-7</id>
    </interactant>
    <interactant intactId="EBI-466029">
        <id>P42858</id>
        <label>HTT</label>
    </interactant>
    <organismsDiffer>false</organismsDiffer>
    <experiments>12</experiments>
</comment>
<comment type="interaction">
    <interactant intactId="EBI-12007872">
        <id>O75410-7</id>
    </interactant>
    <interactant intactId="EBI-1104564">
        <id>Q9Y316</id>
        <label>MEMO1</label>
    </interactant>
    <organismsDiffer>false</organismsDiffer>
    <experiments>3</experiments>
</comment>
<comment type="interaction">
    <interactant intactId="EBI-12007872">
        <id>O75410-7</id>
    </interactant>
    <interactant intactId="EBI-747035">
        <id>Q9H788</id>
        <label>SH2D4A</label>
    </interactant>
    <organismsDiffer>false</organismsDiffer>
    <experiments>3</experiments>
</comment>
<comment type="interaction">
    <interactant intactId="EBI-12007872">
        <id>O75410-7</id>
    </interactant>
    <interactant intactId="EBI-2828217">
        <id>O43422</id>
        <label>THAP12</label>
    </interactant>
    <organismsDiffer>false</organismsDiffer>
    <experiments>3</experiments>
</comment>
<comment type="interaction">
    <interactant intactId="EBI-12007872">
        <id>O75410-7</id>
    </interactant>
    <interactant intactId="EBI-286285">
        <id>P10827</id>
        <label>THRA</label>
    </interactant>
    <organismsDiffer>false</organismsDiffer>
    <experiments>3</experiments>
</comment>
<comment type="interaction">
    <interactant intactId="EBI-12007872">
        <id>O75410-7</id>
    </interactant>
    <interactant intactId="EBI-10237226">
        <id>Q15911-2</id>
        <label>ZFHX3</label>
    </interactant>
    <organismsDiffer>false</organismsDiffer>
    <experiments>3</experiments>
</comment>
<comment type="interaction">
    <interactant intactId="EBI-12007872">
        <id>O75410-7</id>
    </interactant>
    <interactant intactId="EBI-12006434">
        <id>Q96MX3</id>
        <label>ZNF48</label>
    </interactant>
    <organismsDiffer>false</organismsDiffer>
    <experiments>3</experiments>
</comment>
<comment type="interaction">
    <interactant intactId="EBI-21986506">
        <id>O75410-10</id>
    </interactant>
    <interactant intactId="EBI-21350183">
        <id>P63059-1</id>
        <label>Thra</label>
    </interactant>
    <organismsDiffer>true</organismsDiffer>
    <experiments>2</experiments>
</comment>
<comment type="interaction">
    <interactant intactId="EBI-21986506">
        <id>O75410-10</id>
    </interactant>
    <interactant intactId="EBI-21987107">
        <id>P63059-2</id>
        <label>Thra</label>
    </interactant>
    <organismsDiffer>true</organismsDiffer>
    <experiments>2</experiments>
</comment>
<comment type="subcellular location">
    <subcellularLocation>
        <location evidence="8">Cytoplasm</location>
    </subcellularLocation>
    <subcellularLocation>
        <location evidence="8">Nucleus</location>
    </subcellularLocation>
    <subcellularLocation>
        <location evidence="11">Cytoplasm</location>
        <location evidence="11">Cytoskeleton</location>
        <location evidence="11">Microtubule organizing center</location>
        <location evidence="11">Centrosome</location>
    </subcellularLocation>
    <subcellularLocation>
        <location evidence="11">Midbody</location>
    </subcellularLocation>
    <text evidence="11">Nucleus during interphase. Weakly concentrated at centrosomes during mitosis and colocalizes with AURKC at the midbody during cytokinesis.</text>
</comment>
<comment type="subcellular location">
    <molecule>Isoform 5</molecule>
    <subcellularLocation>
        <location evidence="21">Membrane</location>
        <topology evidence="21">Lipid-anchor</topology>
    </subcellularLocation>
</comment>
<comment type="subcellular location">
    <molecule>Isoform 10</molecule>
    <subcellularLocation>
        <location evidence="10">Cytoplasm</location>
    </subcellularLocation>
</comment>
<comment type="alternative products">
    <event type="alternative splicing"/>
    <isoform>
        <id>O75410-1</id>
        <name>1</name>
        <name>A</name>
        <name>Long</name>
        <name evidence="19">TACC1-A</name>
        <sequence type="displayed"/>
    </isoform>
    <isoform>
        <id>O75410-2</id>
        <name>2</name>
        <name>F</name>
        <name evidence="19">TACC1-G</name>
        <sequence type="described" ref="VSP_012647"/>
    </isoform>
    <isoform>
        <id>O75410-3</id>
        <name>3</name>
        <name>E</name>
        <sequence type="described" ref="VSP_012638"/>
    </isoform>
    <isoform>
        <id>O75410-4</id>
        <name>4</name>
        <name>D</name>
        <sequence type="described" ref="VSP_012641 VSP_012642"/>
    </isoform>
    <isoform>
        <id>O75410-5</id>
        <name>5</name>
        <name>C</name>
        <sequence type="described" ref="VSP_012639 VSP_012646"/>
    </isoform>
    <isoform>
        <id>O75410-6</id>
        <name>6</name>
        <name>Short</name>
        <name evidence="19">TACC1-S</name>
        <sequence type="described" ref="VSP_012644 VSP_012645"/>
    </isoform>
    <isoform>
        <id>O75410-7</id>
        <name>7</name>
        <sequence type="described" ref="VSP_012637 VSP_012643 VSP_012648"/>
    </isoform>
    <isoform>
        <id>O75410-8</id>
        <name>8</name>
        <sequence type="described" ref="VSP_012640"/>
    </isoform>
    <isoform>
        <id>O75410-9</id>
        <name>9</name>
        <name evidence="19">TACC1-K</name>
        <sequence type="described" ref="VSP_012648"/>
    </isoform>
    <isoform>
        <id>O75410-10</id>
        <name>10</name>
        <name evidence="19">TACC1-J</name>
        <sequence type="described" ref="VSP_012644 VSP_012645 VSP_012648"/>
    </isoform>
</comment>
<comment type="tissue specificity">
    <text evidence="5 6">Isoform 1, isoform 3 and isoform 5 are ubiquitous. Isoform 2 is strongly expressed in the brain, weakly detectable in lung and colon, and overexpressed in gastric cancer. Isoform 4 is not detected in normal tissues, but strong expression was found in gastric cancer tissues. Down-regulated in a subset of cases of breast cancer.</text>
</comment>
<comment type="developmental stage">
    <text>Expressed at high level during early embryogenesis.</text>
</comment>
<comment type="PTM">
    <text evidence="5 11">Isoform 1 is heavily phosphorylated; isoform 6 is not.</text>
</comment>
<comment type="similarity">
    <text evidence="21">Belongs to the TACC family.</text>
</comment>
<comment type="sequence caution" evidence="21">
    <conflict type="erroneous initiation">
        <sequence resource="EMBL-CDS" id="BAG65314"/>
    </conflict>
    <text>Extended N-terminus.</text>
</comment>
<comment type="online information" name="Atlas of Genetics and Cytogenetics in Oncology and Haematology">
    <link uri="https://atlasgeneticsoncology.org/gene/42456/TACC1"/>
</comment>
<accession>O75410</accession>
<accession>B2RBD9</accession>
<accession>B4E302</accession>
<accession>D3DSX6</accession>
<accession>Q6Y687</accession>
<accession>Q86YG7</accession>
<accession>Q8IUJ2</accession>
<accession>Q8IUJ3</accession>
<accession>Q8IUJ4</accession>
<accession>Q8IZG2</accession>
<accession>Q8NEY7</accession>
<accession>Q9UPP9</accession>
<evidence type="ECO:0000250" key="1">
    <source>
        <dbReference type="UniProtKB" id="Q6Y685"/>
    </source>
</evidence>
<evidence type="ECO:0000255" key="2"/>
<evidence type="ECO:0000256" key="3">
    <source>
        <dbReference type="SAM" id="MobiDB-lite"/>
    </source>
</evidence>
<evidence type="ECO:0000269" key="4">
    <source>
    </source>
</evidence>
<evidence type="ECO:0000269" key="5">
    <source>
    </source>
</evidence>
<evidence type="ECO:0000269" key="6">
    <source>
    </source>
</evidence>
<evidence type="ECO:0000269" key="7">
    <source>
    </source>
</evidence>
<evidence type="ECO:0000269" key="8">
    <source>
    </source>
</evidence>
<evidence type="ECO:0000269" key="9">
    <source>
    </source>
</evidence>
<evidence type="ECO:0000269" key="10">
    <source>
    </source>
</evidence>
<evidence type="ECO:0000269" key="11">
    <source>
    </source>
</evidence>
<evidence type="ECO:0000269" key="12">
    <source>
    </source>
</evidence>
<evidence type="ECO:0000303" key="13">
    <source>
    </source>
</evidence>
<evidence type="ECO:0000303" key="14">
    <source>
    </source>
</evidence>
<evidence type="ECO:0000303" key="15">
    <source>
    </source>
</evidence>
<evidence type="ECO:0000303" key="16">
    <source>
    </source>
</evidence>
<evidence type="ECO:0000303" key="17">
    <source>
    </source>
</evidence>
<evidence type="ECO:0000303" key="18">
    <source>
    </source>
</evidence>
<evidence type="ECO:0000303" key="19">
    <source>
    </source>
</evidence>
<evidence type="ECO:0000303" key="20">
    <source ref="3"/>
</evidence>
<evidence type="ECO:0000305" key="21"/>
<evidence type="ECO:0007744" key="22">
    <source>
    </source>
</evidence>
<evidence type="ECO:0007744" key="23">
    <source>
    </source>
</evidence>
<evidence type="ECO:0007744" key="24">
    <source>
    </source>
</evidence>
<evidence type="ECO:0007744" key="25">
    <source>
    </source>
</evidence>
<evidence type="ECO:0007744" key="26">
    <source>
    </source>
</evidence>
<dbReference type="EMBL" id="AF049910">
    <property type="protein sequence ID" value="AAC32327.1"/>
    <property type="molecule type" value="mRNA"/>
</dbReference>
<dbReference type="EMBL" id="AY177411">
    <property type="protein sequence ID" value="AAO53446.1"/>
    <property type="molecule type" value="mRNA"/>
</dbReference>
<dbReference type="EMBL" id="AY139007">
    <property type="protein sequence ID" value="AAN28955.1"/>
    <property type="molecule type" value="mRNA"/>
</dbReference>
<dbReference type="EMBL" id="AK304507">
    <property type="protein sequence ID" value="BAG65314.1"/>
    <property type="status" value="ALT_INIT"/>
    <property type="molecule type" value="mRNA"/>
</dbReference>
<dbReference type="EMBL" id="AK314620">
    <property type="protein sequence ID" value="BAG37186.1"/>
    <property type="molecule type" value="mRNA"/>
</dbReference>
<dbReference type="EMBL" id="CH471080">
    <property type="protein sequence ID" value="EAW63293.1"/>
    <property type="molecule type" value="Genomic_DNA"/>
</dbReference>
<dbReference type="EMBL" id="CH471080">
    <property type="protein sequence ID" value="EAW63296.1"/>
    <property type="molecule type" value="Genomic_DNA"/>
</dbReference>
<dbReference type="EMBL" id="CH471080">
    <property type="protein sequence ID" value="EAW63298.1"/>
    <property type="molecule type" value="Genomic_DNA"/>
</dbReference>
<dbReference type="EMBL" id="BC041391">
    <property type="protein sequence ID" value="AAH41391.1"/>
    <property type="molecule type" value="mRNA"/>
</dbReference>
<dbReference type="EMBL" id="AB029026">
    <property type="protein sequence ID" value="BAA83055.1"/>
    <property type="molecule type" value="mRNA"/>
</dbReference>
<dbReference type="EMBL" id="AY039239">
    <property type="protein sequence ID" value="AAK68658.1"/>
    <property type="molecule type" value="mRNA"/>
</dbReference>
<dbReference type="EMBL" id="AY072874">
    <property type="protein sequence ID" value="AAL62461.1"/>
    <property type="molecule type" value="mRNA"/>
</dbReference>
<dbReference type="EMBL" id="AY072875">
    <property type="protein sequence ID" value="AAL62462.1"/>
    <property type="molecule type" value="mRNA"/>
</dbReference>
<dbReference type="EMBL" id="AY072876">
    <property type="protein sequence ID" value="AAL62463.2"/>
    <property type="molecule type" value="mRNA"/>
</dbReference>
<dbReference type="CCDS" id="CCDS47845.1">
    <molecule id="O75410-6"/>
</dbReference>
<dbReference type="CCDS" id="CCDS55224.1">
    <molecule id="O75410-3"/>
</dbReference>
<dbReference type="CCDS" id="CCDS6109.1">
    <molecule id="O75410-1"/>
</dbReference>
<dbReference type="CCDS" id="CCDS87601.1">
    <molecule id="O75410-7"/>
</dbReference>
<dbReference type="RefSeq" id="NP_001116296.1">
    <molecule id="O75410-6"/>
    <property type="nucleotide sequence ID" value="NM_001122824.2"/>
</dbReference>
<dbReference type="RefSeq" id="NP_001139688.1">
    <molecule id="O75410-3"/>
    <property type="nucleotide sequence ID" value="NM_001146216.3"/>
</dbReference>
<dbReference type="RefSeq" id="NP_001339708.1">
    <molecule id="O75410-2"/>
    <property type="nucleotide sequence ID" value="NM_001352779.2"/>
</dbReference>
<dbReference type="RefSeq" id="NP_001339712.1">
    <molecule id="O75410-9"/>
    <property type="nucleotide sequence ID" value="NM_001352783.2"/>
</dbReference>
<dbReference type="RefSeq" id="NP_001339715.1">
    <molecule id="O75410-7"/>
    <property type="nucleotide sequence ID" value="NM_001352786.2"/>
</dbReference>
<dbReference type="RefSeq" id="NP_001339718.1">
    <molecule id="O75410-3"/>
    <property type="nucleotide sequence ID" value="NM_001352789.2"/>
</dbReference>
<dbReference type="RefSeq" id="NP_001339719.1">
    <molecule id="O75410-3"/>
    <property type="nucleotide sequence ID" value="NM_001352790.2"/>
</dbReference>
<dbReference type="RefSeq" id="NP_001339720.1">
    <molecule id="O75410-3"/>
    <property type="nucleotide sequence ID" value="NM_001352791.1"/>
</dbReference>
<dbReference type="RefSeq" id="NP_001339732.1">
    <molecule id="O75410-10"/>
    <property type="nucleotide sequence ID" value="NM_001352803.2"/>
</dbReference>
<dbReference type="RefSeq" id="NP_006274.2">
    <molecule id="O75410-1"/>
    <property type="nucleotide sequence ID" value="NM_006283.3"/>
</dbReference>
<dbReference type="RefSeq" id="XP_005273682.1">
    <molecule id="O75410-2"/>
    <property type="nucleotide sequence ID" value="XM_005273625.5"/>
</dbReference>
<dbReference type="RefSeq" id="XP_011542933.1">
    <property type="nucleotide sequence ID" value="XM_011544631.1"/>
</dbReference>
<dbReference type="RefSeq" id="XP_011542934.1">
    <molecule id="O75410-2"/>
    <property type="nucleotide sequence ID" value="XM_011544632.3"/>
</dbReference>
<dbReference type="RefSeq" id="XP_011542936.1">
    <property type="nucleotide sequence ID" value="XM_011544634.1"/>
</dbReference>
<dbReference type="RefSeq" id="XP_011542938.1">
    <molecule id="O75410-5"/>
    <property type="nucleotide sequence ID" value="XM_011544636.3"/>
</dbReference>
<dbReference type="RefSeq" id="XP_011542939.1">
    <property type="nucleotide sequence ID" value="XM_011544637.1"/>
</dbReference>
<dbReference type="RefSeq" id="XP_016869261.1">
    <property type="nucleotide sequence ID" value="XM_017013772.1"/>
</dbReference>
<dbReference type="RefSeq" id="XP_016869262.1">
    <property type="nucleotide sequence ID" value="XM_017013773.1"/>
</dbReference>
<dbReference type="RefSeq" id="XP_016869263.1">
    <property type="nucleotide sequence ID" value="XM_017013774.1"/>
</dbReference>
<dbReference type="RefSeq" id="XP_047278094.1">
    <molecule id="O75410-2"/>
    <property type="nucleotide sequence ID" value="XM_047422138.1"/>
</dbReference>
<dbReference type="RefSeq" id="XP_047278095.1">
    <molecule id="O75410-1"/>
    <property type="nucleotide sequence ID" value="XM_047422139.1"/>
</dbReference>
<dbReference type="RefSeq" id="XP_047278096.1">
    <molecule id="O75410-2"/>
    <property type="nucleotide sequence ID" value="XM_047422140.1"/>
</dbReference>
<dbReference type="RefSeq" id="XP_047278099.1">
    <molecule id="O75410-9"/>
    <property type="nucleotide sequence ID" value="XM_047422143.1"/>
</dbReference>
<dbReference type="RefSeq" id="XP_047278100.1">
    <molecule id="O75410-9"/>
    <property type="nucleotide sequence ID" value="XM_047422144.1"/>
</dbReference>
<dbReference type="RefSeq" id="XP_054217059.1">
    <molecule id="O75410-2"/>
    <property type="nucleotide sequence ID" value="XM_054361084.1"/>
</dbReference>
<dbReference type="RefSeq" id="XP_054217060.1">
    <molecule id="O75410-1"/>
    <property type="nucleotide sequence ID" value="XM_054361085.1"/>
</dbReference>
<dbReference type="RefSeq" id="XP_054217061.1">
    <molecule id="O75410-2"/>
    <property type="nucleotide sequence ID" value="XM_054361086.1"/>
</dbReference>
<dbReference type="RefSeq" id="XP_054217062.1">
    <molecule id="O75410-2"/>
    <property type="nucleotide sequence ID" value="XM_054361087.1"/>
</dbReference>
<dbReference type="RefSeq" id="XP_054217063.1">
    <molecule id="O75410-2"/>
    <property type="nucleotide sequence ID" value="XM_054361088.1"/>
</dbReference>
<dbReference type="RefSeq" id="XP_054217066.1">
    <molecule id="O75410-9"/>
    <property type="nucleotide sequence ID" value="XM_054361091.1"/>
</dbReference>
<dbReference type="RefSeq" id="XP_054217069.1">
    <molecule id="O75410-9"/>
    <property type="nucleotide sequence ID" value="XM_054361094.1"/>
</dbReference>
<dbReference type="RefSeq" id="XP_054217077.1">
    <molecule id="O75410-5"/>
    <property type="nucleotide sequence ID" value="XM_054361102.1"/>
</dbReference>
<dbReference type="SMR" id="O75410"/>
<dbReference type="BioGRID" id="112730">
    <property type="interactions" value="187"/>
</dbReference>
<dbReference type="CORUM" id="O75410"/>
<dbReference type="FunCoup" id="O75410">
    <property type="interactions" value="1513"/>
</dbReference>
<dbReference type="IntAct" id="O75410">
    <property type="interactions" value="93"/>
</dbReference>
<dbReference type="MINT" id="O75410"/>
<dbReference type="STRING" id="9606.ENSP00000321703"/>
<dbReference type="iPTMnet" id="O75410"/>
<dbReference type="PhosphoSitePlus" id="O75410"/>
<dbReference type="SwissPalm" id="O75410"/>
<dbReference type="BioMuta" id="TACC1"/>
<dbReference type="jPOST" id="O75410"/>
<dbReference type="MassIVE" id="O75410"/>
<dbReference type="PaxDb" id="9606-ENSP00000321703"/>
<dbReference type="PeptideAtlas" id="O75410"/>
<dbReference type="ProteomicsDB" id="49977">
    <molecule id="O75410-1"/>
</dbReference>
<dbReference type="ProteomicsDB" id="49978">
    <molecule id="O75410-2"/>
</dbReference>
<dbReference type="ProteomicsDB" id="49979">
    <molecule id="O75410-3"/>
</dbReference>
<dbReference type="ProteomicsDB" id="49980">
    <molecule id="O75410-4"/>
</dbReference>
<dbReference type="ProteomicsDB" id="49981">
    <molecule id="O75410-5"/>
</dbReference>
<dbReference type="ProteomicsDB" id="49982">
    <molecule id="O75410-6"/>
</dbReference>
<dbReference type="ProteomicsDB" id="49983">
    <molecule id="O75410-7"/>
</dbReference>
<dbReference type="ProteomicsDB" id="49984">
    <molecule id="O75410-8"/>
</dbReference>
<dbReference type="Pumba" id="O75410"/>
<dbReference type="Antibodypedia" id="4470">
    <property type="antibodies" value="240 antibodies from 32 providers"/>
</dbReference>
<dbReference type="DNASU" id="6867"/>
<dbReference type="Ensembl" id="ENST00000276520.12">
    <molecule id="O75410-6"/>
    <property type="protein sequence ID" value="ENSP00000276520.8"/>
    <property type="gene ID" value="ENSG00000147526.20"/>
</dbReference>
<dbReference type="Ensembl" id="ENST00000317827.9">
    <molecule id="O75410-1"/>
    <property type="protein sequence ID" value="ENSP00000321703.4"/>
    <property type="gene ID" value="ENSG00000147526.20"/>
</dbReference>
<dbReference type="Ensembl" id="ENST00000518415.5">
    <molecule id="O75410-7"/>
    <property type="protein sequence ID" value="ENSP00000428706.1"/>
    <property type="gene ID" value="ENSG00000147526.20"/>
</dbReference>
<dbReference type="Ensembl" id="ENST00000520615.5">
    <molecule id="O75410-3"/>
    <property type="protein sequence ID" value="ENSP00000428450.1"/>
    <property type="gene ID" value="ENSG00000147526.20"/>
</dbReference>
<dbReference type="GeneID" id="6867"/>
<dbReference type="KEGG" id="hsa:6867"/>
<dbReference type="MANE-Select" id="ENST00000317827.9">
    <property type="protein sequence ID" value="ENSP00000321703.4"/>
    <property type="RefSeq nucleotide sequence ID" value="NM_006283.3"/>
    <property type="RefSeq protein sequence ID" value="NP_006274.2"/>
</dbReference>
<dbReference type="UCSC" id="uc003xlz.4">
    <molecule id="O75410-1"/>
    <property type="organism name" value="human"/>
</dbReference>
<dbReference type="AGR" id="HGNC:11522"/>
<dbReference type="CTD" id="6867"/>
<dbReference type="DisGeNET" id="6867"/>
<dbReference type="GeneCards" id="TACC1"/>
<dbReference type="HGNC" id="HGNC:11522">
    <property type="gene designation" value="TACC1"/>
</dbReference>
<dbReference type="HPA" id="ENSG00000147526">
    <property type="expression patterns" value="Low tissue specificity"/>
</dbReference>
<dbReference type="MalaCards" id="TACC1"/>
<dbReference type="MIM" id="605301">
    <property type="type" value="gene"/>
</dbReference>
<dbReference type="neXtProt" id="NX_O75410"/>
<dbReference type="OpenTargets" id="ENSG00000147526"/>
<dbReference type="Orphanet" id="251579">
    <property type="disease" value="Giant cell glioblastoma"/>
</dbReference>
<dbReference type="Orphanet" id="251576">
    <property type="disease" value="Gliosarcoma"/>
</dbReference>
<dbReference type="PharmGKB" id="PA36299"/>
<dbReference type="VEuPathDB" id="HostDB:ENSG00000147526"/>
<dbReference type="eggNOG" id="ENOG502QUCC">
    <property type="taxonomic scope" value="Eukaryota"/>
</dbReference>
<dbReference type="GeneTree" id="ENSGT00940000156991"/>
<dbReference type="HOGENOM" id="CLU_005375_2_1_1"/>
<dbReference type="InParanoid" id="O75410"/>
<dbReference type="OMA" id="DISMHQT"/>
<dbReference type="OrthoDB" id="10255048at2759"/>
<dbReference type="PAN-GO" id="O75410">
    <property type="GO annotations" value="4 GO annotations based on evolutionary models"/>
</dbReference>
<dbReference type="PhylomeDB" id="O75410"/>
<dbReference type="TreeFam" id="TF333149"/>
<dbReference type="PathwayCommons" id="O75410"/>
<dbReference type="SignaLink" id="O75410"/>
<dbReference type="SIGNOR" id="O75410"/>
<dbReference type="BioGRID-ORCS" id="6867">
    <property type="hits" value="6 hits in 1160 CRISPR screens"/>
</dbReference>
<dbReference type="CD-CODE" id="8C2F96ED">
    <property type="entry name" value="Centrosome"/>
</dbReference>
<dbReference type="CD-CODE" id="FB4E32DD">
    <property type="entry name" value="Presynaptic clusters and postsynaptic densities"/>
</dbReference>
<dbReference type="ChiTaRS" id="TACC1">
    <property type="organism name" value="human"/>
</dbReference>
<dbReference type="GeneWiki" id="TACC1"/>
<dbReference type="GenomeRNAi" id="6867"/>
<dbReference type="Pharos" id="O75410">
    <property type="development level" value="Tbio"/>
</dbReference>
<dbReference type="PRO" id="PR:O75410"/>
<dbReference type="Proteomes" id="UP000005640">
    <property type="component" value="Chromosome 8"/>
</dbReference>
<dbReference type="RNAct" id="O75410">
    <property type="molecule type" value="protein"/>
</dbReference>
<dbReference type="Bgee" id="ENSG00000147526">
    <property type="expression patterns" value="Expressed in middle temporal gyrus and 214 other cell types or tissues"/>
</dbReference>
<dbReference type="ExpressionAtlas" id="O75410">
    <property type="expression patterns" value="baseline and differential"/>
</dbReference>
<dbReference type="GO" id="GO:0005813">
    <property type="term" value="C:centrosome"/>
    <property type="evidence" value="ECO:0007669"/>
    <property type="project" value="UniProtKB-SubCell"/>
</dbReference>
<dbReference type="GO" id="GO:0005737">
    <property type="term" value="C:cytoplasm"/>
    <property type="evidence" value="ECO:0000318"/>
    <property type="project" value="GO_Central"/>
</dbReference>
<dbReference type="GO" id="GO:0005829">
    <property type="term" value="C:cytosol"/>
    <property type="evidence" value="ECO:0000314"/>
    <property type="project" value="HPA"/>
</dbReference>
<dbReference type="GO" id="GO:0016020">
    <property type="term" value="C:membrane"/>
    <property type="evidence" value="ECO:0007669"/>
    <property type="project" value="UniProtKB-SubCell"/>
</dbReference>
<dbReference type="GO" id="GO:0030496">
    <property type="term" value="C:midbody"/>
    <property type="evidence" value="ECO:0007669"/>
    <property type="project" value="UniProtKB-SubCell"/>
</dbReference>
<dbReference type="GO" id="GO:0005634">
    <property type="term" value="C:nucleus"/>
    <property type="evidence" value="ECO:0007669"/>
    <property type="project" value="UniProtKB-SubCell"/>
</dbReference>
<dbReference type="GO" id="GO:0030331">
    <property type="term" value="F:nuclear estrogen receptor binding"/>
    <property type="evidence" value="ECO:0000314"/>
    <property type="project" value="UniProtKB"/>
</dbReference>
<dbReference type="GO" id="GO:0035259">
    <property type="term" value="F:nuclear glucocorticoid receptor binding"/>
    <property type="evidence" value="ECO:0000314"/>
    <property type="project" value="UniProtKB"/>
</dbReference>
<dbReference type="GO" id="GO:0016922">
    <property type="term" value="F:nuclear receptor binding"/>
    <property type="evidence" value="ECO:0000314"/>
    <property type="project" value="UniProtKB"/>
</dbReference>
<dbReference type="GO" id="GO:0042974">
    <property type="term" value="F:nuclear retinoic acid receptor binding"/>
    <property type="evidence" value="ECO:0000314"/>
    <property type="project" value="UniProtKB"/>
</dbReference>
<dbReference type="GO" id="GO:0046965">
    <property type="term" value="F:nuclear retinoid X receptor binding"/>
    <property type="evidence" value="ECO:0000314"/>
    <property type="project" value="UniProtKB"/>
</dbReference>
<dbReference type="GO" id="GO:0046966">
    <property type="term" value="F:nuclear thyroid hormone receptor binding"/>
    <property type="evidence" value="ECO:0000314"/>
    <property type="project" value="UniProtKB"/>
</dbReference>
<dbReference type="GO" id="GO:0042975">
    <property type="term" value="F:peroxisome proliferator activated receptor binding"/>
    <property type="evidence" value="ECO:0000314"/>
    <property type="project" value="UniProtKB"/>
</dbReference>
<dbReference type="GO" id="GO:0003713">
    <property type="term" value="F:transcription coactivator activity"/>
    <property type="evidence" value="ECO:0000315"/>
    <property type="project" value="GO_Central"/>
</dbReference>
<dbReference type="GO" id="GO:0051301">
    <property type="term" value="P:cell division"/>
    <property type="evidence" value="ECO:0007669"/>
    <property type="project" value="UniProtKB-KW"/>
</dbReference>
<dbReference type="GO" id="GO:0021987">
    <property type="term" value="P:cerebral cortex development"/>
    <property type="evidence" value="ECO:0000318"/>
    <property type="project" value="GO_Central"/>
</dbReference>
<dbReference type="GO" id="GO:0000226">
    <property type="term" value="P:microtubule cytoskeleton organization"/>
    <property type="evidence" value="ECO:0000318"/>
    <property type="project" value="GO_Central"/>
</dbReference>
<dbReference type="GO" id="GO:0007052">
    <property type="term" value="P:mitotic spindle organization"/>
    <property type="evidence" value="ECO:0007669"/>
    <property type="project" value="InterPro"/>
</dbReference>
<dbReference type="GO" id="GO:0007097">
    <property type="term" value="P:nuclear migration"/>
    <property type="evidence" value="ECO:0000318"/>
    <property type="project" value="GO_Central"/>
</dbReference>
<dbReference type="FunFam" id="1.20.5.1700:FF:000001">
    <property type="entry name" value="Transforming acidic coiled-coil-containing protein 1 isoform 2"/>
    <property type="match status" value="1"/>
</dbReference>
<dbReference type="Gene3D" id="1.20.5.1700">
    <property type="match status" value="1"/>
</dbReference>
<dbReference type="InterPro" id="IPR039915">
    <property type="entry name" value="TACC"/>
</dbReference>
<dbReference type="InterPro" id="IPR007707">
    <property type="entry name" value="TACC_C"/>
</dbReference>
<dbReference type="PANTHER" id="PTHR13924">
    <property type="entry name" value="TRANSFORMING ACIDIC COILED-COIL CONTAINING PROTEIN 1/2"/>
    <property type="match status" value="1"/>
</dbReference>
<dbReference type="PANTHER" id="PTHR13924:SF12">
    <property type="entry name" value="TRANSFORMING ACIDIC COILED-COIL-CONTAINING PROTEIN 1"/>
    <property type="match status" value="1"/>
</dbReference>
<dbReference type="Pfam" id="PF05010">
    <property type="entry name" value="TACC_C"/>
    <property type="match status" value="1"/>
</dbReference>
<reference key="1">
    <citation type="journal article" date="1999" name="Oncogene">
        <title>Cloning of TACC1, an embryonically expressed, potentially transforming coiled coil containing gene, from the 8p11 breast cancer amplicon.</title>
        <authorList>
            <person name="Still I.H."/>
            <person name="Hamilton M."/>
            <person name="Vince P."/>
            <person name="Wolfman A."/>
            <person name="Cowell J.K."/>
        </authorList>
    </citation>
    <scope>NUCLEOTIDE SEQUENCE [MRNA] (ISOFORM 1)</scope>
</reference>
<reference key="2">
    <citation type="journal article" date="2004" name="BMC Evol. Biol.">
        <title>Structure-function evolution of the transforming acidic coiled coil genes revealed by analysis of phylogenetically diverse organisms.</title>
        <authorList>
            <person name="Still I.H."/>
            <person name="Vettaikkorumakankauv A.K."/>
            <person name="DiMatteo A."/>
            <person name="Liang P."/>
        </authorList>
    </citation>
    <scope>NUCLEOTIDE SEQUENCE [MRNA] (ISOFORM 6)</scope>
</reference>
<reference key="3">
    <citation type="submission" date="2002-08" db="EMBL/GenBank/DDBJ databases">
        <title>Cloning of a novel human gene similar to TACC1.</title>
        <authorList>
            <person name="Li F."/>
            <person name="Yao K.T."/>
        </authorList>
    </citation>
    <scope>NUCLEOTIDE SEQUENCE [MRNA] (ISOFORM 8)</scope>
</reference>
<reference key="4">
    <citation type="journal article" date="2004" name="Nat. Genet.">
        <title>Complete sequencing and characterization of 21,243 full-length human cDNAs.</title>
        <authorList>
            <person name="Ota T."/>
            <person name="Suzuki Y."/>
            <person name="Nishikawa T."/>
            <person name="Otsuki T."/>
            <person name="Sugiyama T."/>
            <person name="Irie R."/>
            <person name="Wakamatsu A."/>
            <person name="Hayashi K."/>
            <person name="Sato H."/>
            <person name="Nagai K."/>
            <person name="Kimura K."/>
            <person name="Makita H."/>
            <person name="Sekine M."/>
            <person name="Obayashi M."/>
            <person name="Nishi T."/>
            <person name="Shibahara T."/>
            <person name="Tanaka T."/>
            <person name="Ishii S."/>
            <person name="Yamamoto J."/>
            <person name="Saito K."/>
            <person name="Kawai Y."/>
            <person name="Isono Y."/>
            <person name="Nakamura Y."/>
            <person name="Nagahari K."/>
            <person name="Murakami K."/>
            <person name="Yasuda T."/>
            <person name="Iwayanagi T."/>
            <person name="Wagatsuma M."/>
            <person name="Shiratori A."/>
            <person name="Sudo H."/>
            <person name="Hosoiri T."/>
            <person name="Kaku Y."/>
            <person name="Kodaira H."/>
            <person name="Kondo H."/>
            <person name="Sugawara M."/>
            <person name="Takahashi M."/>
            <person name="Kanda K."/>
            <person name="Yokoi T."/>
            <person name="Furuya T."/>
            <person name="Kikkawa E."/>
            <person name="Omura Y."/>
            <person name="Abe K."/>
            <person name="Kamihara K."/>
            <person name="Katsuta N."/>
            <person name="Sato K."/>
            <person name="Tanikawa M."/>
            <person name="Yamazaki M."/>
            <person name="Ninomiya K."/>
            <person name="Ishibashi T."/>
            <person name="Yamashita H."/>
            <person name="Murakawa K."/>
            <person name="Fujimori K."/>
            <person name="Tanai H."/>
            <person name="Kimata M."/>
            <person name="Watanabe M."/>
            <person name="Hiraoka S."/>
            <person name="Chiba Y."/>
            <person name="Ishida S."/>
            <person name="Ono Y."/>
            <person name="Takiguchi S."/>
            <person name="Watanabe S."/>
            <person name="Yosida M."/>
            <person name="Hotuta T."/>
            <person name="Kusano J."/>
            <person name="Kanehori K."/>
            <person name="Takahashi-Fujii A."/>
            <person name="Hara H."/>
            <person name="Tanase T.-O."/>
            <person name="Nomura Y."/>
            <person name="Togiya S."/>
            <person name="Komai F."/>
            <person name="Hara R."/>
            <person name="Takeuchi K."/>
            <person name="Arita M."/>
            <person name="Imose N."/>
            <person name="Musashino K."/>
            <person name="Yuuki H."/>
            <person name="Oshima A."/>
            <person name="Sasaki N."/>
            <person name="Aotsuka S."/>
            <person name="Yoshikawa Y."/>
            <person name="Matsunawa H."/>
            <person name="Ichihara T."/>
            <person name="Shiohata N."/>
            <person name="Sano S."/>
            <person name="Moriya S."/>
            <person name="Momiyama H."/>
            <person name="Satoh N."/>
            <person name="Takami S."/>
            <person name="Terashima Y."/>
            <person name="Suzuki O."/>
            <person name="Nakagawa S."/>
            <person name="Senoh A."/>
            <person name="Mizoguchi H."/>
            <person name="Goto Y."/>
            <person name="Shimizu F."/>
            <person name="Wakebe H."/>
            <person name="Hishigaki H."/>
            <person name="Watanabe T."/>
            <person name="Sugiyama A."/>
            <person name="Takemoto M."/>
            <person name="Kawakami B."/>
            <person name="Yamazaki M."/>
            <person name="Watanabe K."/>
            <person name="Kumagai A."/>
            <person name="Itakura S."/>
            <person name="Fukuzumi Y."/>
            <person name="Fujimori Y."/>
            <person name="Komiyama M."/>
            <person name="Tashiro H."/>
            <person name="Tanigami A."/>
            <person name="Fujiwara T."/>
            <person name="Ono T."/>
            <person name="Yamada K."/>
            <person name="Fujii Y."/>
            <person name="Ozaki K."/>
            <person name="Hirao M."/>
            <person name="Ohmori Y."/>
            <person name="Kawabata A."/>
            <person name="Hikiji T."/>
            <person name="Kobatake N."/>
            <person name="Inagaki H."/>
            <person name="Ikema Y."/>
            <person name="Okamoto S."/>
            <person name="Okitani R."/>
            <person name="Kawakami T."/>
            <person name="Noguchi S."/>
            <person name="Itoh T."/>
            <person name="Shigeta K."/>
            <person name="Senba T."/>
            <person name="Matsumura K."/>
            <person name="Nakajima Y."/>
            <person name="Mizuno T."/>
            <person name="Morinaga M."/>
            <person name="Sasaki M."/>
            <person name="Togashi T."/>
            <person name="Oyama M."/>
            <person name="Hata H."/>
            <person name="Watanabe M."/>
            <person name="Komatsu T."/>
            <person name="Mizushima-Sugano J."/>
            <person name="Satoh T."/>
            <person name="Shirai Y."/>
            <person name="Takahashi Y."/>
            <person name="Nakagawa K."/>
            <person name="Okumura K."/>
            <person name="Nagase T."/>
            <person name="Nomura N."/>
            <person name="Kikuchi H."/>
            <person name="Masuho Y."/>
            <person name="Yamashita R."/>
            <person name="Nakai K."/>
            <person name="Yada T."/>
            <person name="Nakamura Y."/>
            <person name="Ohara O."/>
            <person name="Isogai T."/>
            <person name="Sugano S."/>
        </authorList>
    </citation>
    <scope>NUCLEOTIDE SEQUENCE [LARGE SCALE MRNA] (ISOFORMS 1 AND 9)</scope>
    <source>
        <tissue>Testis</tissue>
        <tissue>Uterus</tissue>
    </source>
</reference>
<reference key="5">
    <citation type="submission" date="2005-09" db="EMBL/GenBank/DDBJ databases">
        <authorList>
            <person name="Mural R.J."/>
            <person name="Istrail S."/>
            <person name="Sutton G.G."/>
            <person name="Florea L."/>
            <person name="Halpern A.L."/>
            <person name="Mobarry C.M."/>
            <person name="Lippert R."/>
            <person name="Walenz B."/>
            <person name="Shatkay H."/>
            <person name="Dew I."/>
            <person name="Miller J.R."/>
            <person name="Flanigan M.J."/>
            <person name="Edwards N.J."/>
            <person name="Bolanos R."/>
            <person name="Fasulo D."/>
            <person name="Halldorsson B.V."/>
            <person name="Hannenhalli S."/>
            <person name="Turner R."/>
            <person name="Yooseph S."/>
            <person name="Lu F."/>
            <person name="Nusskern D.R."/>
            <person name="Shue B.C."/>
            <person name="Zheng X.H."/>
            <person name="Zhong F."/>
            <person name="Delcher A.L."/>
            <person name="Huson D.H."/>
            <person name="Kravitz S.A."/>
            <person name="Mouchard L."/>
            <person name="Reinert K."/>
            <person name="Remington K.A."/>
            <person name="Clark A.G."/>
            <person name="Waterman M.S."/>
            <person name="Eichler E.E."/>
            <person name="Adams M.D."/>
            <person name="Hunkapiller M.W."/>
            <person name="Myers E.W."/>
            <person name="Venter J.C."/>
        </authorList>
    </citation>
    <scope>NUCLEOTIDE SEQUENCE [LARGE SCALE GENOMIC DNA]</scope>
</reference>
<reference key="6">
    <citation type="journal article" date="2004" name="Genome Res.">
        <title>The status, quality, and expansion of the NIH full-length cDNA project: the Mammalian Gene Collection (MGC).</title>
        <authorList>
            <consortium name="The MGC Project Team"/>
        </authorList>
    </citation>
    <scope>NUCLEOTIDE SEQUENCE [LARGE SCALE MRNA] (ISOFORM 7)</scope>
    <source>
        <tissue>Brain</tissue>
    </source>
</reference>
<reference key="7">
    <citation type="journal article" date="1999" name="DNA Res.">
        <title>Prediction of the coding sequences of unidentified human genes. XIV. The complete sequences of 100 new cDNA clones from brain which code for large proteins in vitro.</title>
        <authorList>
            <person name="Kikuno R."/>
            <person name="Nagase T."/>
            <person name="Ishikawa K."/>
            <person name="Hirosawa M."/>
            <person name="Miyajima N."/>
            <person name="Tanaka A."/>
            <person name="Kotani H."/>
            <person name="Nomura N."/>
            <person name="Ohara O."/>
        </authorList>
    </citation>
    <scope>NUCLEOTIDE SEQUENCE [LARGE SCALE MRNA] OF 364-805 (ISOFORM 2)</scope>
    <source>
        <tissue>Brain</tissue>
    </source>
</reference>
<reference key="8">
    <citation type="journal article" date="2002" name="Br. J. Cancer">
        <title>Serological identification and expression analysis of gastric cancer-associated genes.</title>
        <authorList>
            <person name="Line A."/>
            <person name="Stengrevics A."/>
            <person name="Slucka Z."/>
            <person name="Li G."/>
            <person name="Jankevics E."/>
            <person name="Rees R.C."/>
        </authorList>
    </citation>
    <scope>NUCLEOTIDE SEQUENCE [MRNA] OF 450-805 (ISOFORM 2)</scope>
    <source>
        <tissue>Gastric adenocarcinoma</tissue>
    </source>
</reference>
<reference key="9">
    <citation type="journal article" date="2002" name="Cancer Genet. Cytogenet.">
        <title>Altered splicing pattern of TACC1 mRNA in gastric cancer.</title>
        <authorList>
            <person name="Line A."/>
            <person name="Slucka Z."/>
            <person name="Stengrevics A."/>
            <person name="Li G."/>
            <person name="Rees R.C."/>
        </authorList>
    </citation>
    <scope>NUCLEOTIDE SEQUENCE [MRNA] OF 1-543 (ISOFORM 3)</scope>
    <scope>NUCLEOTIDE SEQUENCE OF 1-571 (ISOFORMS 4 AND 5)</scope>
    <scope>TISSUE SPECIFICITY</scope>
    <source>
        <tissue>Stomach cancer</tissue>
    </source>
</reference>
<reference key="10">
    <citation type="journal article" date="2000" name="Proc. Natl. Acad. Sci. U.S.A.">
        <title>The TACC domain identifies a family of centrosomal proteins that can interact with microtubules.</title>
        <authorList>
            <person name="Gergely F."/>
            <person name="Karlsson C."/>
            <person name="Still I.H."/>
            <person name="Cowell J.K."/>
            <person name="Kilmartin J."/>
            <person name="Raff J.W."/>
        </authorList>
    </citation>
    <scope>CHARACTERIZATION</scope>
    <source>
        <tissue>Brain</tissue>
        <tissue>Fetal brain</tissue>
        <tissue>Skeletal muscle</tissue>
    </source>
</reference>
<reference key="11">
    <citation type="journal article" date="2002" name="Biochem. J.">
        <title>Interaction of the transforming acidic coiled-coil 1 (TACC1) protein with ch-TOG and GAS41/NuBI1 suggests multiple TACC1-containing protein complexes in human cells.</title>
        <authorList>
            <person name="Lauffart B."/>
            <person name="Howell S.J."/>
            <person name="Tasch J.E."/>
            <person name="Cowell J.K."/>
            <person name="Still I.H."/>
        </authorList>
    </citation>
    <scope>INTERACTION WITH KIAA0097 AND YEATS4</scope>
</reference>
<reference key="12">
    <citation type="journal article" date="2002" name="Oncogene">
        <title>Carcinogenesis and translational controls: TACC1 is down-regulated in human cancers and associates with mRNA regulators.</title>
        <authorList>
            <person name="Conte N."/>
            <person name="Charafe-Jauffret E."/>
            <person name="Delaval B."/>
            <person name="Adelaide J."/>
            <person name="Ginestier C."/>
            <person name="Geneix J."/>
            <person name="Isnardon D."/>
            <person name="Jacquemier J."/>
            <person name="Birnbaum D."/>
        </authorList>
    </citation>
    <scope>INTERACTION WITH LSM7 AND SNRPG</scope>
    <scope>TISSUE SPECIFICITY</scope>
    <scope>PHOSPHORYLATION</scope>
</reference>
<reference key="13">
    <citation type="journal article" date="2003" name="Oncogene">
        <title>TACC1-chTOG-Aurora A protein complex in breast cancer.</title>
        <authorList>
            <person name="Conte N."/>
            <person name="Delaval B."/>
            <person name="Ginestier C."/>
            <person name="Ferrand A."/>
            <person name="Isnardon D."/>
            <person name="Larroque C."/>
            <person name="Prigent C."/>
            <person name="Seraphin B."/>
            <person name="Jacquemier J."/>
            <person name="Birnbaum D."/>
        </authorList>
    </citation>
    <scope>INTERACTION WITH KIAA0097; LSM7; TDRD7 AND AURKA</scope>
</reference>
<reference key="14">
    <citation type="journal article" date="2004" name="Oncogene">
        <title>The transforming acidic coiled coil proteins interact with nuclear histone acetyltransferases.</title>
        <authorList>
            <person name="Gangisetty O."/>
            <person name="Lauffart B."/>
            <person name="Sondarva G.V."/>
            <person name="Chelsea D.M."/>
            <person name="Still I.H."/>
        </authorList>
    </citation>
    <scope>INTERACTION WITH GCN5L2 AND PCAF</scope>
    <scope>SUBCELLULAR LOCATION</scope>
</reference>
<reference key="15">
    <citation type="journal article" date="2004" name="Oncogene">
        <title>Aurora B -TACC1 protein complex in cytokinesis.</title>
        <authorList>
            <person name="Delaval B."/>
            <person name="Ferrand A."/>
            <person name="Conte N."/>
            <person name="Larroque C."/>
            <person name="Hernandez-Verdun D."/>
            <person name="Prigent C."/>
            <person name="Birnbaum D."/>
        </authorList>
    </citation>
    <scope>INTERACTION WITH AURKB</scope>
</reference>
<reference key="16">
    <citation type="journal article" date="2005" name="Nat. Biotechnol.">
        <title>Immunoaffinity profiling of tyrosine phosphorylation in cancer cells.</title>
        <authorList>
            <person name="Rush J."/>
            <person name="Moritz A."/>
            <person name="Lee K.A."/>
            <person name="Guo A."/>
            <person name="Goss V.L."/>
            <person name="Spek E.J."/>
            <person name="Zhang H."/>
            <person name="Zha X.-M."/>
            <person name="Polakiewicz R.D."/>
            <person name="Comb M.J."/>
        </authorList>
    </citation>
    <scope>PHOSPHORYLATION [LARGE SCALE ANALYSIS] AT TYR-533</scope>
    <scope>IDENTIFICATION BY MASS SPECTROMETRY [LARGE SCALE ANALYSIS]</scope>
</reference>
<reference key="17">
    <citation type="journal article" date="2006" name="Cell">
        <title>Global, in vivo, and site-specific phosphorylation dynamics in signaling networks.</title>
        <authorList>
            <person name="Olsen J.V."/>
            <person name="Blagoev B."/>
            <person name="Gnad F."/>
            <person name="Macek B."/>
            <person name="Kumar C."/>
            <person name="Mortensen P."/>
            <person name="Mann M."/>
        </authorList>
    </citation>
    <scope>IDENTIFICATION BY MASS SPECTROMETRY [LARGE SCALE ANALYSIS]</scope>
    <source>
        <tissue>Cervix carcinoma</tissue>
    </source>
</reference>
<reference key="18">
    <citation type="journal article" date="2007" name="Science">
        <title>ATM and ATR substrate analysis reveals extensive protein networks responsive to DNA damage.</title>
        <authorList>
            <person name="Matsuoka S."/>
            <person name="Ballif B.A."/>
            <person name="Smogorzewska A."/>
            <person name="McDonald E.R. III"/>
            <person name="Hurov K.E."/>
            <person name="Luo J."/>
            <person name="Bakalarski C.E."/>
            <person name="Zhao Z."/>
            <person name="Solimini N."/>
            <person name="Lerenthal Y."/>
            <person name="Shiloh Y."/>
            <person name="Gygi S.P."/>
            <person name="Elledge S.J."/>
        </authorList>
    </citation>
    <scope>IDENTIFICATION BY MASS SPECTROMETRY [LARGE SCALE ANALYSIS]</scope>
    <source>
        <tissue>Embryonic kidney</tissue>
    </source>
</reference>
<reference key="19">
    <citation type="journal article" date="2008" name="Proc. Natl. Acad. Sci. U.S.A.">
        <title>A quantitative atlas of mitotic phosphorylation.</title>
        <authorList>
            <person name="Dephoure N."/>
            <person name="Zhou C."/>
            <person name="Villen J."/>
            <person name="Beausoleil S.A."/>
            <person name="Bakalarski C.E."/>
            <person name="Elledge S.J."/>
            <person name="Gygi S.P."/>
        </authorList>
    </citation>
    <scope>IDENTIFICATION BY MASS SPECTROMETRY [LARGE SCALE ANALYSIS]</scope>
    <source>
        <tissue>Cervix carcinoma</tissue>
    </source>
</reference>
<reference key="20">
    <citation type="journal article" date="2009" name="Sci. Signal.">
        <title>Quantitative phosphoproteomic analysis of T cell receptor signaling reveals system-wide modulation of protein-protein interactions.</title>
        <authorList>
            <person name="Mayya V."/>
            <person name="Lundgren D.H."/>
            <person name="Hwang S.-I."/>
            <person name="Rezaul K."/>
            <person name="Wu L."/>
            <person name="Eng J.K."/>
            <person name="Rodionov V."/>
            <person name="Han D.K."/>
        </authorList>
    </citation>
    <scope>PHOSPHORYLATION [LARGE SCALE ANALYSIS] AT SER-276</scope>
    <scope>IDENTIFICATION BY MASS SPECTROMETRY [LARGE SCALE ANALYSIS]</scope>
    <source>
        <tissue>Leukemic T-cell</tissue>
    </source>
</reference>
<reference key="21">
    <citation type="journal article" date="2010" name="BMC Mol. Biol.">
        <title>The transforming acidic coiled coil (TACC1) protein modulates the transcriptional activity of the nuclear receptors TR and RAR.</title>
        <authorList>
            <person name="Guyot R."/>
            <person name="Vincent S."/>
            <person name="Bertin J."/>
            <person name="Samarut J."/>
            <person name="Ravel-Chapuis P."/>
        </authorList>
    </citation>
    <scope>FUNCTION</scope>
    <scope>IDENTIFICATION OF ISOFORMS 1; 6; 9 AND 10</scope>
    <scope>INTERACTION WITH ESR1; NR3C1; PPARG; RARA; RXRA; THRA AND THRB</scope>
    <scope>SUBCELLULAR LOCATION</scope>
    <scope>MUTAGENESIS OF 609-LEU-ILE-610</scope>
</reference>
<reference key="22">
    <citation type="journal article" date="2010" name="Sci. Signal.">
        <title>Quantitative phosphoproteomics reveals widespread full phosphorylation site occupancy during mitosis.</title>
        <authorList>
            <person name="Olsen J.V."/>
            <person name="Vermeulen M."/>
            <person name="Santamaria A."/>
            <person name="Kumar C."/>
            <person name="Miller M.L."/>
            <person name="Jensen L.J."/>
            <person name="Gnad F."/>
            <person name="Cox J."/>
            <person name="Jensen T.S."/>
            <person name="Nigg E.A."/>
            <person name="Brunak S."/>
            <person name="Mann M."/>
        </authorList>
    </citation>
    <scope>ACETYLATION [LARGE SCALE ANALYSIS] AT ALA-2</scope>
    <scope>PHOSPHORYLATION [LARGE SCALE ANALYSIS] AT SER-4 AND SER-10</scope>
    <scope>CLEAVAGE OF INITIATOR METHIONINE [LARGE SCALE ANALYSIS]</scope>
    <scope>IDENTIFICATION BY MASS SPECTROMETRY [LARGE SCALE ANALYSIS]</scope>
    <source>
        <tissue>Cervix carcinoma</tissue>
    </source>
</reference>
<reference key="23">
    <citation type="journal article" date="2011" name="BMC Syst. Biol.">
        <title>Initial characterization of the human central proteome.</title>
        <authorList>
            <person name="Burkard T.R."/>
            <person name="Planyavsky M."/>
            <person name="Kaupe I."/>
            <person name="Breitwieser F.P."/>
            <person name="Buerckstuemmer T."/>
            <person name="Bennett K.L."/>
            <person name="Superti-Furga G."/>
            <person name="Colinge J."/>
        </authorList>
    </citation>
    <scope>IDENTIFICATION BY MASS SPECTROMETRY [LARGE SCALE ANALYSIS]</scope>
</reference>
<reference key="24">
    <citation type="journal article" date="2011" name="Biochem. Biophys. Res. Commun.">
        <title>Aurora-C interacts with and phosphorylates the transforming acidic coiled-coil 1 protein.</title>
        <authorList>
            <person name="Gabillard J.C."/>
            <person name="Ulisse S."/>
            <person name="Baldini E."/>
            <person name="Sorrenti S."/>
            <person name="Cremet J.Y."/>
            <person name="Coccaro C."/>
            <person name="Prigent C."/>
            <person name="D'Armiento M."/>
            <person name="Arlot-Bonnemains Y."/>
        </authorList>
    </citation>
    <scope>SUBCELLULAR LOCATION</scope>
    <scope>INTERACTION WITH AURKC</scope>
    <scope>PHOSPHORYLATION AT SER-228 BY AURKC</scope>
    <scope>MUTAGENESIS OF SER-228</scope>
</reference>
<reference key="25">
    <citation type="journal article" date="2013" name="J. Proteome Res.">
        <title>Toward a comprehensive characterization of a human cancer cell phosphoproteome.</title>
        <authorList>
            <person name="Zhou H."/>
            <person name="Di Palma S."/>
            <person name="Preisinger C."/>
            <person name="Peng M."/>
            <person name="Polat A.N."/>
            <person name="Heck A.J."/>
            <person name="Mohammed S."/>
        </authorList>
    </citation>
    <scope>PHOSPHORYLATION [LARGE SCALE ANALYSIS] AT SER-44; SER-147; SER-153; SER-248 AND SER-276</scope>
    <scope>IDENTIFICATION BY MASS SPECTROMETRY [LARGE SCALE ANALYSIS]</scope>
    <source>
        <tissue>Cervix carcinoma</tissue>
        <tissue>Erythroleukemia</tissue>
    </source>
</reference>
<reference key="26">
    <citation type="journal article" date="2014" name="J. Proteomics">
        <title>An enzyme assisted RP-RPLC approach for in-depth analysis of human liver phosphoproteome.</title>
        <authorList>
            <person name="Bian Y."/>
            <person name="Song C."/>
            <person name="Cheng K."/>
            <person name="Dong M."/>
            <person name="Wang F."/>
            <person name="Huang J."/>
            <person name="Sun D."/>
            <person name="Wang L."/>
            <person name="Ye M."/>
            <person name="Zou H."/>
        </authorList>
    </citation>
    <scope>PHOSPHORYLATION [LARGE SCALE ANALYSIS] AT SER-276 AND SER-591</scope>
    <scope>IDENTIFICATION BY MASS SPECTROMETRY [LARGE SCALE ANALYSIS]</scope>
    <source>
        <tissue>Liver</tissue>
    </source>
</reference>
<reference key="27">
    <citation type="journal article" date="2015" name="Angew. Chem. Int. Ed.">
        <title>Multifunctional reagents for quantitative proteome-wide analysis of protein modification in human cells and dynamic profiling of protein lipidation during vertebrate development.</title>
        <authorList>
            <person name="Broncel M."/>
            <person name="Serwa R.A."/>
            <person name="Ciepla P."/>
            <person name="Krause E."/>
            <person name="Dallman M.J."/>
            <person name="Magee A.I."/>
            <person name="Tate E.W."/>
        </authorList>
    </citation>
    <scope>MYRISTOYLATION AT GLY-2 (ISOFORM 5)</scope>
    <scope>CLEAVAGE OF INITIATOR METHIONINE (ISOFORM 5)</scope>
    <scope>IDENTIFICATION BY MASS SPECTROMETRY</scope>
</reference>
<sequence>MAFSPWQILSPVQWAKWTWSAVRGGAAGEDEAGGPEGDPEEEDSQAETKSLSFSSDSEGNFETPEAETPIRSPFKESCDPSLGLAGPGAKSQESQEADEQLVAEVVEKCSSKTCSKPSENEVPQQAIDSHSVKNFREEPEHDFSKISIVRPFSIETKDSTDISAVLGTKAAHGCVTAVSGKALPSSPPDALQDEAMTEGSMGVTLEASAEADLKAGNSCPELVPSRRSKLRKPKPVPLRKKAIGGEFSDTNAAVEGTPLPKASYHFSPEELDENTSPLLGDARFQKSPPDLKETPGTLSSDTNDSGVELGEESRSSPLKLEFDFTEDTGNIEARKALPRKLGRKLGSTLTPKIQKDGISKSAGLEQPTDPVARDGPLSQTSSKPDPSQWESPSFNPFGSHSVLQNSPPLSSEGSYHFDPDNFDESMDPFKPTTTLTSSDFCSPTGNHVNEILESPKKAKSRLITSGCKVKKHETQSLALDACSRDEGAVISQISDISNRDGHATDEEKLASTSCGQKSAGAEVKGEPEEDLEYFECSNVPVSTINHAFSSSEAGIEKETCQKMEEDGSTVLGLLESSAEKAPVSVSCGGESPLDGICLSESDKTAVLTLIREEIITKEIEANEWKKKYEETRQEVLEMRKIVAEYEKTIAQMIEDEQRTSMTSQKSFQQLTMEKEQALADLNSVERSLSDLFRRYENLKGVLEGFKKNEEALKKCAQDYLARVKQEEQRYQALKIHAEEKLDKANEEIAQVRTKAKAESAALHAGLRKEQMKVESLERALQQKNQEIEELTKICDELIAKLGKTD</sequence>
<protein>
    <recommendedName>
        <fullName>Transforming acidic coiled-coil-containing protein 1</fullName>
    </recommendedName>
    <alternativeName>
        <fullName>Gastric cancer antigen Ga55</fullName>
    </alternativeName>
    <alternativeName>
        <fullName>Taxin-1</fullName>
    </alternativeName>
</protein>
<keyword id="KW-0007">Acetylation</keyword>
<keyword id="KW-0010">Activator</keyword>
<keyword id="KW-0025">Alternative splicing</keyword>
<keyword id="KW-0131">Cell cycle</keyword>
<keyword id="KW-0132">Cell division</keyword>
<keyword id="KW-0175">Coiled coil</keyword>
<keyword id="KW-0963">Cytoplasm</keyword>
<keyword id="KW-0206">Cytoskeleton</keyword>
<keyword id="KW-0449">Lipoprotein</keyword>
<keyword id="KW-0472">Membrane</keyword>
<keyword id="KW-0519">Myristate</keyword>
<keyword id="KW-0539">Nucleus</keyword>
<keyword id="KW-0597">Phosphoprotein</keyword>
<keyword id="KW-1267">Proteomics identification</keyword>
<keyword id="KW-1185">Reference proteome</keyword>
<keyword id="KW-0677">Repeat</keyword>
<name>TACC1_HUMAN</name>